<keyword id="KW-0687">Ribonucleoprotein</keyword>
<keyword id="KW-0689">Ribosomal protein</keyword>
<dbReference type="EMBL" id="CP000766">
    <property type="protein sequence ID" value="ABY72749.1"/>
    <property type="molecule type" value="Genomic_DNA"/>
</dbReference>
<dbReference type="SMR" id="B0BY23"/>
<dbReference type="KEGG" id="rrj:RrIowa_0923"/>
<dbReference type="eggNOG" id="COG0257">
    <property type="taxonomic scope" value="Bacteria"/>
</dbReference>
<dbReference type="HOGENOM" id="CLU_135723_3_2_5"/>
<dbReference type="Proteomes" id="UP000000796">
    <property type="component" value="Chromosome"/>
</dbReference>
<dbReference type="GO" id="GO:1990904">
    <property type="term" value="C:ribonucleoprotein complex"/>
    <property type="evidence" value="ECO:0007669"/>
    <property type="project" value="UniProtKB-KW"/>
</dbReference>
<dbReference type="GO" id="GO:0005840">
    <property type="term" value="C:ribosome"/>
    <property type="evidence" value="ECO:0007669"/>
    <property type="project" value="UniProtKB-KW"/>
</dbReference>
<dbReference type="GO" id="GO:0003735">
    <property type="term" value="F:structural constituent of ribosome"/>
    <property type="evidence" value="ECO:0007669"/>
    <property type="project" value="InterPro"/>
</dbReference>
<dbReference type="GO" id="GO:0006412">
    <property type="term" value="P:translation"/>
    <property type="evidence" value="ECO:0007669"/>
    <property type="project" value="UniProtKB-UniRule"/>
</dbReference>
<dbReference type="HAMAP" id="MF_00251">
    <property type="entry name" value="Ribosomal_bL36"/>
    <property type="match status" value="1"/>
</dbReference>
<dbReference type="InterPro" id="IPR000473">
    <property type="entry name" value="Ribosomal_bL36"/>
</dbReference>
<dbReference type="InterPro" id="IPR035977">
    <property type="entry name" value="Ribosomal_bL36_sp"/>
</dbReference>
<dbReference type="InterPro" id="IPR047621">
    <property type="entry name" value="Ribosomal_L36_bact"/>
</dbReference>
<dbReference type="NCBIfam" id="NF002021">
    <property type="entry name" value="PRK00831.1"/>
    <property type="match status" value="1"/>
</dbReference>
<dbReference type="PANTHER" id="PTHR47781">
    <property type="entry name" value="50S RIBOSOMAL PROTEIN L36 2"/>
    <property type="match status" value="1"/>
</dbReference>
<dbReference type="PANTHER" id="PTHR47781:SF1">
    <property type="entry name" value="LARGE RIBOSOMAL SUBUNIT PROTEIN BL36B"/>
    <property type="match status" value="1"/>
</dbReference>
<dbReference type="Pfam" id="PF00444">
    <property type="entry name" value="Ribosomal_L36"/>
    <property type="match status" value="1"/>
</dbReference>
<dbReference type="SUPFAM" id="SSF57840">
    <property type="entry name" value="Ribosomal protein L36"/>
    <property type="match status" value="1"/>
</dbReference>
<dbReference type="PROSITE" id="PS00828">
    <property type="entry name" value="RIBOSOMAL_L36"/>
    <property type="match status" value="1"/>
</dbReference>
<comment type="similarity">
    <text evidence="1">Belongs to the bacterial ribosomal protein bL36 family.</text>
</comment>
<organism>
    <name type="scientific">Rickettsia rickettsii (strain Iowa)</name>
    <dbReference type="NCBI Taxonomy" id="452659"/>
    <lineage>
        <taxon>Bacteria</taxon>
        <taxon>Pseudomonadati</taxon>
        <taxon>Pseudomonadota</taxon>
        <taxon>Alphaproteobacteria</taxon>
        <taxon>Rickettsiales</taxon>
        <taxon>Rickettsiaceae</taxon>
        <taxon>Rickettsieae</taxon>
        <taxon>Rickettsia</taxon>
        <taxon>spotted fever group</taxon>
    </lineage>
</organism>
<reference key="1">
    <citation type="journal article" date="2008" name="Infect. Immun.">
        <title>Genomic comparison of virulent Rickettsia rickettsii Sheila Smith and avirulent Rickettsia rickettsii Iowa.</title>
        <authorList>
            <person name="Ellison D.W."/>
            <person name="Clark T.R."/>
            <person name="Sturdevant D.E."/>
            <person name="Virtaneva K."/>
            <person name="Porcella S.F."/>
            <person name="Hackstadt T."/>
        </authorList>
    </citation>
    <scope>NUCLEOTIDE SEQUENCE [LARGE SCALE GENOMIC DNA]</scope>
    <source>
        <strain>Iowa</strain>
    </source>
</reference>
<protein>
    <recommendedName>
        <fullName evidence="1">Large ribosomal subunit protein bL36</fullName>
    </recommendedName>
    <alternativeName>
        <fullName evidence="2">50S ribosomal protein L36</fullName>
    </alternativeName>
</protein>
<sequence>MKVVSSLKSLKKRDKDCQIVKRRGKIFVINKKNKRFKAKQG</sequence>
<proteinExistence type="inferred from homology"/>
<feature type="chain" id="PRO_1000078481" description="Large ribosomal subunit protein bL36">
    <location>
        <begin position="1"/>
        <end position="41"/>
    </location>
</feature>
<accession>B0BY23</accession>
<gene>
    <name evidence="1" type="primary">rpmJ</name>
    <name type="ordered locus">RrIowa_0923</name>
</gene>
<name>RL36_RICRO</name>
<evidence type="ECO:0000255" key="1">
    <source>
        <dbReference type="HAMAP-Rule" id="MF_00251"/>
    </source>
</evidence>
<evidence type="ECO:0000305" key="2"/>